<comment type="similarity">
    <text evidence="2">Belongs to the protease inhibitor I11 (ecotin) family.</text>
</comment>
<accession>A4HWF0</accession>
<name>ECOT3_LEIIN</name>
<gene>
    <name type="ORF">LinJ15.0540</name>
    <name type="ORF">LinJ_15_0540</name>
</gene>
<protein>
    <recommendedName>
        <fullName>Ecotin-like protein 3</fullName>
    </recommendedName>
</protein>
<dbReference type="EMBL" id="FR796447">
    <property type="protein sequence ID" value="CAM66775.1"/>
    <property type="molecule type" value="Genomic_DNA"/>
</dbReference>
<dbReference type="RefSeq" id="XP_001464391.1">
    <property type="nucleotide sequence ID" value="XM_001464354.1"/>
</dbReference>
<dbReference type="SMR" id="A4HWF0"/>
<dbReference type="MEROPS" id="I11.004"/>
<dbReference type="GeneID" id="5067781"/>
<dbReference type="KEGG" id="lif:LINJ_15_0540"/>
<dbReference type="VEuPathDB" id="TriTrypDB:LINF_150012500"/>
<dbReference type="eggNOG" id="ENOG502SM48">
    <property type="taxonomic scope" value="Eukaryota"/>
</dbReference>
<dbReference type="InParanoid" id="A4HWF0"/>
<dbReference type="OMA" id="PGRHENC"/>
<dbReference type="Proteomes" id="UP000008153">
    <property type="component" value="Chromosome 15"/>
</dbReference>
<dbReference type="GO" id="GO:0004867">
    <property type="term" value="F:serine-type endopeptidase inhibitor activity"/>
    <property type="evidence" value="ECO:0007669"/>
    <property type="project" value="InterPro"/>
</dbReference>
<dbReference type="FunFam" id="4.10.1230.10:FF:000002">
    <property type="entry name" value="Ecotin family (I11)"/>
    <property type="match status" value="1"/>
</dbReference>
<dbReference type="Gene3D" id="2.60.40.550">
    <property type="entry name" value="Ecotin"/>
    <property type="match status" value="1"/>
</dbReference>
<dbReference type="Gene3D" id="4.10.1230.10">
    <property type="entry name" value="Ecotin, trypsin inhibitor"/>
    <property type="match status" value="1"/>
</dbReference>
<dbReference type="InterPro" id="IPR027438">
    <property type="entry name" value="Ecotin_C"/>
</dbReference>
<dbReference type="InterPro" id="IPR036198">
    <property type="entry name" value="Ecotin_sf"/>
</dbReference>
<dbReference type="InterPro" id="IPR005658">
    <property type="entry name" value="Prot_inh_ecotin"/>
</dbReference>
<dbReference type="PANTHER" id="PTHR35890">
    <property type="match status" value="1"/>
</dbReference>
<dbReference type="PANTHER" id="PTHR35890:SF3">
    <property type="entry name" value="ECOTIN"/>
    <property type="match status" value="1"/>
</dbReference>
<dbReference type="Pfam" id="PF03974">
    <property type="entry name" value="Ecotin"/>
    <property type="match status" value="1"/>
</dbReference>
<dbReference type="SUPFAM" id="SSF49772">
    <property type="entry name" value="Ecotin, trypsin inhibitor"/>
    <property type="match status" value="1"/>
</dbReference>
<organism>
    <name type="scientific">Leishmania infantum</name>
    <dbReference type="NCBI Taxonomy" id="5671"/>
    <lineage>
        <taxon>Eukaryota</taxon>
        <taxon>Discoba</taxon>
        <taxon>Euglenozoa</taxon>
        <taxon>Kinetoplastea</taxon>
        <taxon>Metakinetoplastina</taxon>
        <taxon>Trypanosomatida</taxon>
        <taxon>Trypanosomatidae</taxon>
        <taxon>Leishmaniinae</taxon>
        <taxon>Leishmania</taxon>
    </lineage>
</organism>
<proteinExistence type="inferred from homology"/>
<evidence type="ECO:0000256" key="1">
    <source>
        <dbReference type="SAM" id="MobiDB-lite"/>
    </source>
</evidence>
<evidence type="ECO:0000305" key="2"/>
<reference key="1">
    <citation type="journal article" date="2007" name="Nat. Genet.">
        <title>Comparative genomic analysis of three Leishmania species that cause diverse human disease.</title>
        <authorList>
            <person name="Peacock C.S."/>
            <person name="Seeger K."/>
            <person name="Harris D."/>
            <person name="Murphy L."/>
            <person name="Ruiz J.C."/>
            <person name="Quail M.A."/>
            <person name="Peters N."/>
            <person name="Adlem E."/>
            <person name="Tivey A."/>
            <person name="Aslett M."/>
            <person name="Kerhornou A."/>
            <person name="Ivens A."/>
            <person name="Fraser A."/>
            <person name="Rajandream M.-A."/>
            <person name="Carver T."/>
            <person name="Norbertczak H."/>
            <person name="Chillingworth T."/>
            <person name="Hance Z."/>
            <person name="Jagels K."/>
            <person name="Moule S."/>
            <person name="Ormond D."/>
            <person name="Rutter S."/>
            <person name="Sqaures R."/>
            <person name="Whitehead S."/>
            <person name="Rabbinowitsch E."/>
            <person name="Arrowsmith C."/>
            <person name="White B."/>
            <person name="Thurston S."/>
            <person name="Bringaud F."/>
            <person name="Baldauf S.L."/>
            <person name="Faulconbridge A."/>
            <person name="Jeffares D."/>
            <person name="Depledge D.P."/>
            <person name="Oyola S.O."/>
            <person name="Hilley J.D."/>
            <person name="Brito L.O."/>
            <person name="Tosi L.R.O."/>
            <person name="Barrell B."/>
            <person name="Cruz A.K."/>
            <person name="Mottram J.C."/>
            <person name="Smith D.F."/>
            <person name="Berriman M."/>
        </authorList>
    </citation>
    <scope>NUCLEOTIDE SEQUENCE [LARGE SCALE GENOMIC DNA]</scope>
    <source>
        <strain>JPCM5</strain>
    </source>
</reference>
<keyword id="KW-1185">Reference proteome</keyword>
<sequence length="378" mass="41729">MPSLQDYHVPYPAAAPGQVRKVIYLPQQNPTVEQQHLRVQIIPGRHENCEDGRLYKLTGSVTEETLQGWGYSYYVVKLGDIYAAHRSSSDPARVTTFVALDENPVIAYNSKLPIVVYVPEGAELRYRVWTDDTSLVQSIQQQPEAPALPQPHLVPVTERQECPHELPRCGAPGEYVTQDCKTSMLSVEEVHRLSSSTPPLIPSAVRGSAHEAHAAPPLHSAELEERVCPVMEHLEVCPQNNGHEGREQPAEEASTLKRRSSSSSSSNPRHHSANEPSPSRPRLSSTEYWPHENSKTKRSPSATHKPRRSTDSAAIEEAGVGAPKKNRSSSSSASSKRKAEDNVYEKTMKNFWNRARSDSPRKASASSKKSGNGSKADP</sequence>
<feature type="chain" id="PRO_0000291598" description="Ecotin-like protein 3">
    <location>
        <begin position="1"/>
        <end position="378"/>
    </location>
</feature>
<feature type="region of interest" description="Disordered" evidence="1">
    <location>
        <begin position="191"/>
        <end position="216"/>
    </location>
</feature>
<feature type="region of interest" description="Disordered" evidence="1">
    <location>
        <begin position="238"/>
        <end position="378"/>
    </location>
</feature>
<feature type="compositionally biased region" description="Polar residues" evidence="1">
    <location>
        <begin position="274"/>
        <end position="287"/>
    </location>
</feature>
<feature type="compositionally biased region" description="Basic and acidic residues" evidence="1">
    <location>
        <begin position="337"/>
        <end position="348"/>
    </location>
</feature>
<feature type="compositionally biased region" description="Low complexity" evidence="1">
    <location>
        <begin position="362"/>
        <end position="378"/>
    </location>
</feature>